<accession>Q729I2</accession>
<reference key="1">
    <citation type="journal article" date="2004" name="Nat. Biotechnol.">
        <title>The genome sequence of the anaerobic, sulfate-reducing bacterium Desulfovibrio vulgaris Hildenborough.</title>
        <authorList>
            <person name="Heidelberg J.F."/>
            <person name="Seshadri R."/>
            <person name="Haveman S.A."/>
            <person name="Hemme C.L."/>
            <person name="Paulsen I.T."/>
            <person name="Kolonay J.F."/>
            <person name="Eisen J.A."/>
            <person name="Ward N.L."/>
            <person name="Methe B.A."/>
            <person name="Brinkac L.M."/>
            <person name="Daugherty S.C."/>
            <person name="DeBoy R.T."/>
            <person name="Dodson R.J."/>
            <person name="Durkin A.S."/>
            <person name="Madupu R."/>
            <person name="Nelson W.C."/>
            <person name="Sullivan S.A."/>
            <person name="Fouts D.E."/>
            <person name="Haft D.H."/>
            <person name="Selengut J."/>
            <person name="Peterson J.D."/>
            <person name="Davidsen T.M."/>
            <person name="Zafar N."/>
            <person name="Zhou L."/>
            <person name="Radune D."/>
            <person name="Dimitrov G."/>
            <person name="Hance M."/>
            <person name="Tran K."/>
            <person name="Khouri H.M."/>
            <person name="Gill J."/>
            <person name="Utterback T.R."/>
            <person name="Feldblyum T.V."/>
            <person name="Wall J.D."/>
            <person name="Voordouw G."/>
            <person name="Fraser C.M."/>
        </authorList>
    </citation>
    <scope>NUCLEOTIDE SEQUENCE [LARGE SCALE GENOMIC DNA]</scope>
    <source>
        <strain>ATCC 29579 / DSM 644 / CCUG 34227 / NCIMB 8303 / VKM B-1760 / Hildenborough</strain>
    </source>
</reference>
<sequence length="344" mass="35729">MVRRLSEIAGLLGLELRGEDREVSGVNTLEAAGPDEISFLANPRYMGQLSTTRAGAVIVAAEHAQDVAVALVSANPYFDFGRTLALFARKQGSFEGVSEQAVVHPEAVVGEGCAVYPHVYIGPRARIGAGTVLFPGCYIGEDCVVGGGCTLYPNVVLMAGVEIGDDCILHAGVVLGADGFGFARTEFGIQKIPQVGTVRIGSDVEIGANTTIDRSVLGVTTVGDGTKIDNLVMLGHNVEMGRNCLIVSQVGISGSTKVGDDVTMAGQVGVAGHLSIGSGVTIGPKSGVAKDIPAGETVGGAPAVDKSTYMRTLTVMPKLPDMYKRLGKLEKELAELKKSLSEEQ</sequence>
<evidence type="ECO:0000255" key="1">
    <source>
        <dbReference type="HAMAP-Rule" id="MF_00523"/>
    </source>
</evidence>
<feature type="chain" id="PRO_0000059668" description="UDP-3-O-acylglucosamine N-acyltransferase">
    <location>
        <begin position="1"/>
        <end position="344"/>
    </location>
</feature>
<feature type="active site" description="Proton acceptor" evidence="1">
    <location>
        <position position="236"/>
    </location>
</feature>
<organism>
    <name type="scientific">Nitratidesulfovibrio vulgaris (strain ATCC 29579 / DSM 644 / CCUG 34227 / NCIMB 8303 / VKM B-1760 / Hildenborough)</name>
    <name type="common">Desulfovibrio vulgaris</name>
    <dbReference type="NCBI Taxonomy" id="882"/>
    <lineage>
        <taxon>Bacteria</taxon>
        <taxon>Pseudomonadati</taxon>
        <taxon>Thermodesulfobacteriota</taxon>
        <taxon>Desulfovibrionia</taxon>
        <taxon>Desulfovibrionales</taxon>
        <taxon>Desulfovibrionaceae</taxon>
        <taxon>Nitratidesulfovibrio</taxon>
    </lineage>
</organism>
<name>LPXD_NITV2</name>
<protein>
    <recommendedName>
        <fullName evidence="1">UDP-3-O-acylglucosamine N-acyltransferase</fullName>
        <ecNumber evidence="1">2.3.1.191</ecNumber>
    </recommendedName>
</protein>
<gene>
    <name evidence="1" type="primary">lpxD</name>
    <name type="ordered locus">DVU_2369</name>
</gene>
<proteinExistence type="inferred from homology"/>
<dbReference type="EC" id="2.3.1.191" evidence="1"/>
<dbReference type="EMBL" id="AE017285">
    <property type="protein sequence ID" value="AAS96842.1"/>
    <property type="molecule type" value="Genomic_DNA"/>
</dbReference>
<dbReference type="RefSeq" id="WP_010939642.1">
    <property type="nucleotide sequence ID" value="NC_002937.3"/>
</dbReference>
<dbReference type="RefSeq" id="YP_011582.1">
    <property type="nucleotide sequence ID" value="NC_002937.3"/>
</dbReference>
<dbReference type="SMR" id="Q729I2"/>
<dbReference type="STRING" id="882.DVU_2369"/>
<dbReference type="PaxDb" id="882-DVU_2369"/>
<dbReference type="EnsemblBacteria" id="AAS96842">
    <property type="protein sequence ID" value="AAS96842"/>
    <property type="gene ID" value="DVU_2369"/>
</dbReference>
<dbReference type="KEGG" id="dvu:DVU_2369"/>
<dbReference type="PATRIC" id="fig|882.5.peg.2144"/>
<dbReference type="eggNOG" id="COG1044">
    <property type="taxonomic scope" value="Bacteria"/>
</dbReference>
<dbReference type="HOGENOM" id="CLU_049865_0_0_7"/>
<dbReference type="OrthoDB" id="9784739at2"/>
<dbReference type="PhylomeDB" id="Q729I2"/>
<dbReference type="UniPathway" id="UPA00973"/>
<dbReference type="Proteomes" id="UP000002194">
    <property type="component" value="Chromosome"/>
</dbReference>
<dbReference type="GO" id="GO:0016020">
    <property type="term" value="C:membrane"/>
    <property type="evidence" value="ECO:0007669"/>
    <property type="project" value="GOC"/>
</dbReference>
<dbReference type="GO" id="GO:0016410">
    <property type="term" value="F:N-acyltransferase activity"/>
    <property type="evidence" value="ECO:0007669"/>
    <property type="project" value="InterPro"/>
</dbReference>
<dbReference type="GO" id="GO:0009245">
    <property type="term" value="P:lipid A biosynthetic process"/>
    <property type="evidence" value="ECO:0007669"/>
    <property type="project" value="UniProtKB-UniRule"/>
</dbReference>
<dbReference type="CDD" id="cd03352">
    <property type="entry name" value="LbH_LpxD"/>
    <property type="match status" value="1"/>
</dbReference>
<dbReference type="Gene3D" id="2.160.10.10">
    <property type="entry name" value="Hexapeptide repeat proteins"/>
    <property type="match status" value="1"/>
</dbReference>
<dbReference type="Gene3D" id="3.40.1390.10">
    <property type="entry name" value="MurE/MurF, N-terminal domain"/>
    <property type="match status" value="1"/>
</dbReference>
<dbReference type="HAMAP" id="MF_00523">
    <property type="entry name" value="LpxD"/>
    <property type="match status" value="1"/>
</dbReference>
<dbReference type="InterPro" id="IPR001451">
    <property type="entry name" value="Hexapep"/>
</dbReference>
<dbReference type="InterPro" id="IPR007691">
    <property type="entry name" value="LpxD"/>
</dbReference>
<dbReference type="InterPro" id="IPR011004">
    <property type="entry name" value="Trimer_LpxA-like_sf"/>
</dbReference>
<dbReference type="InterPro" id="IPR020573">
    <property type="entry name" value="UDP_GlcNAc_AcTrfase_non-rep"/>
</dbReference>
<dbReference type="NCBIfam" id="TIGR01853">
    <property type="entry name" value="lipid_A_lpxD"/>
    <property type="match status" value="1"/>
</dbReference>
<dbReference type="NCBIfam" id="NF002060">
    <property type="entry name" value="PRK00892.1"/>
    <property type="match status" value="1"/>
</dbReference>
<dbReference type="PANTHER" id="PTHR43378">
    <property type="entry name" value="UDP-3-O-ACYLGLUCOSAMINE N-ACYLTRANSFERASE"/>
    <property type="match status" value="1"/>
</dbReference>
<dbReference type="PANTHER" id="PTHR43378:SF2">
    <property type="entry name" value="UDP-3-O-ACYLGLUCOSAMINE N-ACYLTRANSFERASE 1, MITOCHONDRIAL-RELATED"/>
    <property type="match status" value="1"/>
</dbReference>
<dbReference type="Pfam" id="PF00132">
    <property type="entry name" value="Hexapep"/>
    <property type="match status" value="2"/>
</dbReference>
<dbReference type="Pfam" id="PF04613">
    <property type="entry name" value="LpxD"/>
    <property type="match status" value="1"/>
</dbReference>
<dbReference type="SUPFAM" id="SSF51161">
    <property type="entry name" value="Trimeric LpxA-like enzymes"/>
    <property type="match status" value="1"/>
</dbReference>
<keyword id="KW-0012">Acyltransferase</keyword>
<keyword id="KW-0441">Lipid A biosynthesis</keyword>
<keyword id="KW-0444">Lipid biosynthesis</keyword>
<keyword id="KW-0443">Lipid metabolism</keyword>
<keyword id="KW-1185">Reference proteome</keyword>
<keyword id="KW-0677">Repeat</keyword>
<keyword id="KW-0808">Transferase</keyword>
<comment type="function">
    <text evidence="1">Catalyzes the N-acylation of UDP-3-O-acylglucosamine using 3-hydroxyacyl-ACP as the acyl donor. Is involved in the biosynthesis of lipid A, a phosphorylated glycolipid that anchors the lipopolysaccharide to the outer membrane of the cell.</text>
</comment>
<comment type="catalytic activity">
    <reaction evidence="1">
        <text>a UDP-3-O-[(3R)-3-hydroxyacyl]-alpha-D-glucosamine + a (3R)-hydroxyacyl-[ACP] = a UDP-2-N,3-O-bis[(3R)-3-hydroxyacyl]-alpha-D-glucosamine + holo-[ACP] + H(+)</text>
        <dbReference type="Rhea" id="RHEA:53836"/>
        <dbReference type="Rhea" id="RHEA-COMP:9685"/>
        <dbReference type="Rhea" id="RHEA-COMP:9945"/>
        <dbReference type="ChEBI" id="CHEBI:15378"/>
        <dbReference type="ChEBI" id="CHEBI:64479"/>
        <dbReference type="ChEBI" id="CHEBI:78827"/>
        <dbReference type="ChEBI" id="CHEBI:137740"/>
        <dbReference type="ChEBI" id="CHEBI:137748"/>
        <dbReference type="EC" id="2.3.1.191"/>
    </reaction>
</comment>
<comment type="pathway">
    <text evidence="1">Bacterial outer membrane biogenesis; LPS lipid A biosynthesis.</text>
</comment>
<comment type="subunit">
    <text evidence="1">Homotrimer.</text>
</comment>
<comment type="similarity">
    <text evidence="1">Belongs to the transferase hexapeptide repeat family. LpxD subfamily.</text>
</comment>